<reference key="1">
    <citation type="journal article" date="2011" name="MBio">
        <title>Novel metabolic attributes of the genus Cyanothece, comprising a group of unicellular nitrogen-fixing Cyanobacteria.</title>
        <authorList>
            <person name="Bandyopadhyay A."/>
            <person name="Elvitigala T."/>
            <person name="Welsh E."/>
            <person name="Stockel J."/>
            <person name="Liberton M."/>
            <person name="Min H."/>
            <person name="Sherman L.A."/>
            <person name="Pakrasi H.B."/>
        </authorList>
    </citation>
    <scope>NUCLEOTIDE SEQUENCE [LARGE SCALE GENOMIC DNA]</scope>
    <source>
        <strain>PCC 7425 / ATCC 29141</strain>
    </source>
</reference>
<keyword id="KW-0249">Electron transport</keyword>
<keyword id="KW-0349">Heme</keyword>
<keyword id="KW-0408">Iron</keyword>
<keyword id="KW-0472">Membrane</keyword>
<keyword id="KW-0479">Metal-binding</keyword>
<keyword id="KW-0602">Photosynthesis</keyword>
<keyword id="KW-0793">Thylakoid</keyword>
<keyword id="KW-0812">Transmembrane</keyword>
<keyword id="KW-1133">Transmembrane helix</keyword>
<keyword id="KW-0813">Transport</keyword>
<sequence length="222" mass="25077">MFTKQVTNSKVYQWFEERLEIQALADDVSSKYVPPHVNIFYCLGGITLTCFLIQFATGFAMTFYYKPTVTEAFASVQYIMNDVNFGWLIRSIHKWSASMMVLMMILHVFRVYLTGGFKKPRELTWVTGVVLAVITVSFGVTGYSLPWDQVGYWAVKIVSGVPSAIPVVGDTIVELMRGGVSVGQGTLTRYYSLHTFVLPWLIAVFMLLHFLMIRKQGISGPL</sequence>
<proteinExistence type="inferred from homology"/>
<evidence type="ECO:0000255" key="1">
    <source>
        <dbReference type="HAMAP-Rule" id="MF_00633"/>
    </source>
</evidence>
<accession>B8HWC6</accession>
<feature type="chain" id="PRO_1000147336" description="Cytochrome b6">
    <location>
        <begin position="1"/>
        <end position="222"/>
    </location>
</feature>
<feature type="transmembrane region" description="Helical" evidence="1">
    <location>
        <begin position="39"/>
        <end position="59"/>
    </location>
</feature>
<feature type="transmembrane region" description="Helical" evidence="1">
    <location>
        <begin position="97"/>
        <end position="117"/>
    </location>
</feature>
<feature type="transmembrane region" description="Helical" evidence="1">
    <location>
        <begin position="123"/>
        <end position="143"/>
    </location>
</feature>
<feature type="transmembrane region" description="Helical" evidence="1">
    <location>
        <begin position="193"/>
        <end position="213"/>
    </location>
</feature>
<feature type="binding site" description="covalent" evidence="1">
    <location>
        <position position="42"/>
    </location>
    <ligand>
        <name>heme c</name>
        <dbReference type="ChEBI" id="CHEBI:61717"/>
    </ligand>
</feature>
<feature type="binding site" description="axial binding residue" evidence="1">
    <location>
        <position position="93"/>
    </location>
    <ligand>
        <name>heme b</name>
        <dbReference type="ChEBI" id="CHEBI:60344"/>
        <label>2</label>
    </ligand>
    <ligandPart>
        <name>Fe</name>
        <dbReference type="ChEBI" id="CHEBI:18248"/>
    </ligandPart>
</feature>
<feature type="binding site" description="axial binding residue" evidence="1">
    <location>
        <position position="107"/>
    </location>
    <ligand>
        <name>heme b</name>
        <dbReference type="ChEBI" id="CHEBI:60344"/>
        <label>1</label>
    </ligand>
    <ligandPart>
        <name>Fe</name>
        <dbReference type="ChEBI" id="CHEBI:18248"/>
    </ligandPart>
</feature>
<feature type="binding site" description="axial binding residue" evidence="1">
    <location>
        <position position="194"/>
    </location>
    <ligand>
        <name>heme b</name>
        <dbReference type="ChEBI" id="CHEBI:60344"/>
        <label>2</label>
    </ligand>
    <ligandPart>
        <name>Fe</name>
        <dbReference type="ChEBI" id="CHEBI:18248"/>
    </ligandPart>
</feature>
<feature type="binding site" description="axial binding residue" evidence="1">
    <location>
        <position position="209"/>
    </location>
    <ligand>
        <name>heme b</name>
        <dbReference type="ChEBI" id="CHEBI:60344"/>
        <label>1</label>
    </ligand>
    <ligandPart>
        <name>Fe</name>
        <dbReference type="ChEBI" id="CHEBI:18248"/>
    </ligandPart>
</feature>
<name>CYB6_CYAP4</name>
<comment type="function">
    <text evidence="1">Component of the cytochrome b6-f complex, which mediates electron transfer between photosystem II (PSII) and photosystem I (PSI), cyclic electron flow around PSI, and state transitions.</text>
</comment>
<comment type="cofactor">
    <cofactor evidence="1">
        <name>heme b</name>
        <dbReference type="ChEBI" id="CHEBI:60344"/>
    </cofactor>
    <text evidence="1">Binds 2 heme b groups non-covalently with two histidine residues as axial ligands.</text>
</comment>
<comment type="cofactor">
    <cofactor evidence="1">
        <name>heme c</name>
        <dbReference type="ChEBI" id="CHEBI:61717"/>
    </cofactor>
    <text evidence="1">Binds one heme group covalently by a single cysteine link with no axial amino acid ligand. This heme was named heme ci.</text>
</comment>
<comment type="subunit">
    <text evidence="1">The 4 large subunits of the cytochrome b6-f complex are cytochrome b6, subunit IV (17 kDa polypeptide, PetD), cytochrome f and the Rieske protein, while the 4 small subunits are PetG, PetL, PetM and PetN. The complex functions as a dimer.</text>
</comment>
<comment type="subcellular location">
    <subcellularLocation>
        <location evidence="1">Cellular thylakoid membrane</location>
        <topology evidence="1">Multi-pass membrane protein</topology>
    </subcellularLocation>
</comment>
<comment type="miscellaneous">
    <text evidence="1">Heme 1 (or BH or b566) is high-potential and absorbs at about 566 nm, and heme 2 (or BL or b562) is low-potential and absorbs at about 562 nm.</text>
</comment>
<comment type="similarity">
    <text evidence="1">Belongs to the cytochrome b family. PetB subfamily.</text>
</comment>
<gene>
    <name evidence="1" type="primary">petB</name>
    <name type="ordered locus">Cyan7425_2347</name>
</gene>
<dbReference type="EMBL" id="CP001344">
    <property type="protein sequence ID" value="ACL44705.1"/>
    <property type="molecule type" value="Genomic_DNA"/>
</dbReference>
<dbReference type="SMR" id="B8HWC6"/>
<dbReference type="STRING" id="395961.Cyan7425_2347"/>
<dbReference type="KEGG" id="cyn:Cyan7425_2347"/>
<dbReference type="eggNOG" id="COG1290">
    <property type="taxonomic scope" value="Bacteria"/>
</dbReference>
<dbReference type="HOGENOM" id="CLU_031114_0_2_3"/>
<dbReference type="OrthoDB" id="9804503at2"/>
<dbReference type="GO" id="GO:0031676">
    <property type="term" value="C:plasma membrane-derived thylakoid membrane"/>
    <property type="evidence" value="ECO:0007669"/>
    <property type="project" value="UniProtKB-SubCell"/>
</dbReference>
<dbReference type="GO" id="GO:0045158">
    <property type="term" value="F:electron transporter, transferring electrons within cytochrome b6/f complex of photosystem II activity"/>
    <property type="evidence" value="ECO:0007669"/>
    <property type="project" value="UniProtKB-UniRule"/>
</dbReference>
<dbReference type="GO" id="GO:0046872">
    <property type="term" value="F:metal ion binding"/>
    <property type="evidence" value="ECO:0007669"/>
    <property type="project" value="UniProtKB-KW"/>
</dbReference>
<dbReference type="GO" id="GO:0016491">
    <property type="term" value="F:oxidoreductase activity"/>
    <property type="evidence" value="ECO:0007669"/>
    <property type="project" value="InterPro"/>
</dbReference>
<dbReference type="GO" id="GO:0015979">
    <property type="term" value="P:photosynthesis"/>
    <property type="evidence" value="ECO:0007669"/>
    <property type="project" value="UniProtKB-UniRule"/>
</dbReference>
<dbReference type="GO" id="GO:0022904">
    <property type="term" value="P:respiratory electron transport chain"/>
    <property type="evidence" value="ECO:0007669"/>
    <property type="project" value="InterPro"/>
</dbReference>
<dbReference type="CDD" id="cd00284">
    <property type="entry name" value="Cytochrome_b_N"/>
    <property type="match status" value="1"/>
</dbReference>
<dbReference type="FunFam" id="1.20.810.10:FF:000001">
    <property type="entry name" value="Cytochrome b6"/>
    <property type="match status" value="1"/>
</dbReference>
<dbReference type="Gene3D" id="1.20.810.10">
    <property type="entry name" value="Cytochrome Bc1 Complex, Chain C"/>
    <property type="match status" value="1"/>
</dbReference>
<dbReference type="HAMAP" id="MF_00633">
    <property type="entry name" value="Cytb6_f_cytb6"/>
    <property type="match status" value="1"/>
</dbReference>
<dbReference type="InterPro" id="IPR005797">
    <property type="entry name" value="Cyt_b/b6_N"/>
</dbReference>
<dbReference type="InterPro" id="IPR023530">
    <property type="entry name" value="Cyt_B6_PetB"/>
</dbReference>
<dbReference type="InterPro" id="IPR027387">
    <property type="entry name" value="Cytb/b6-like_sf"/>
</dbReference>
<dbReference type="InterPro" id="IPR048259">
    <property type="entry name" value="Cytochrome_b_N_euk/bac"/>
</dbReference>
<dbReference type="InterPro" id="IPR016174">
    <property type="entry name" value="Di-haem_cyt_TM"/>
</dbReference>
<dbReference type="NCBIfam" id="NF002990">
    <property type="entry name" value="PRK03735.1"/>
    <property type="match status" value="1"/>
</dbReference>
<dbReference type="PANTHER" id="PTHR19271">
    <property type="entry name" value="CYTOCHROME B"/>
    <property type="match status" value="1"/>
</dbReference>
<dbReference type="PANTHER" id="PTHR19271:SF16">
    <property type="entry name" value="CYTOCHROME B"/>
    <property type="match status" value="1"/>
</dbReference>
<dbReference type="Pfam" id="PF00033">
    <property type="entry name" value="Cytochrome_B"/>
    <property type="match status" value="1"/>
</dbReference>
<dbReference type="PIRSF" id="PIRSF000032">
    <property type="entry name" value="Cytochrome_b6"/>
    <property type="match status" value="1"/>
</dbReference>
<dbReference type="SUPFAM" id="SSF81342">
    <property type="entry name" value="Transmembrane di-heme cytochromes"/>
    <property type="match status" value="1"/>
</dbReference>
<dbReference type="PROSITE" id="PS51002">
    <property type="entry name" value="CYTB_NTER"/>
    <property type="match status" value="1"/>
</dbReference>
<organism>
    <name type="scientific">Cyanothece sp. (strain PCC 7425 / ATCC 29141)</name>
    <dbReference type="NCBI Taxonomy" id="395961"/>
    <lineage>
        <taxon>Bacteria</taxon>
        <taxon>Bacillati</taxon>
        <taxon>Cyanobacteriota</taxon>
        <taxon>Cyanophyceae</taxon>
        <taxon>Gomontiellales</taxon>
        <taxon>Cyanothecaceae</taxon>
        <taxon>Cyanothece</taxon>
    </lineage>
</organism>
<protein>
    <recommendedName>
        <fullName evidence="1">Cytochrome b6</fullName>
    </recommendedName>
</protein>